<protein>
    <recommendedName>
        <fullName evidence="1 6">Formate dehydrogenase, mitochondrial</fullName>
        <shortName evidence="1">FDH</shortName>
        <ecNumber evidence="1">1.17.1.9</ecNumber>
    </recommendedName>
    <alternativeName>
        <fullName evidence="1 5">NAD-dependent formate dehydrogenase</fullName>
    </alternativeName>
</protein>
<accession>Q07511</accession>
<accession>Q9ZR28</accession>
<evidence type="ECO:0000255" key="1">
    <source>
        <dbReference type="HAMAP-Rule" id="MF_03210"/>
    </source>
</evidence>
<evidence type="ECO:0000269" key="2">
    <source>
    </source>
</evidence>
<evidence type="ECO:0000269" key="3">
    <source>
    </source>
</evidence>
<evidence type="ECO:0000269" key="4">
    <source>
    </source>
</evidence>
<evidence type="ECO:0000303" key="5">
    <source>
    </source>
</evidence>
<evidence type="ECO:0000303" key="6">
    <source ref="1"/>
</evidence>
<evidence type="ECO:0000305" key="7"/>
<proteinExistence type="evidence at protein level"/>
<comment type="function">
    <text evidence="1 3 4">Catalyzes the NAD(+)-dependent oxidation of formate to carbon dioxide (PubMed:8278546). Involved in the cell stress response. Involved in formate-dependent oxygen uptake coupled to ATP synthesis (PubMed:9490763).</text>
</comment>
<comment type="catalytic activity">
    <reaction evidence="1 3">
        <text>formate + NAD(+) = CO2 + NADH</text>
        <dbReference type="Rhea" id="RHEA:15985"/>
        <dbReference type="ChEBI" id="CHEBI:15740"/>
        <dbReference type="ChEBI" id="CHEBI:16526"/>
        <dbReference type="ChEBI" id="CHEBI:57540"/>
        <dbReference type="ChEBI" id="CHEBI:57945"/>
        <dbReference type="EC" id="1.17.1.9"/>
    </reaction>
</comment>
<comment type="subunit">
    <text evidence="1">Homodimer.</text>
</comment>
<comment type="subcellular location">
    <subcellularLocation>
        <location evidence="1 2 3">Mitochondrion</location>
    </subcellularLocation>
</comment>
<comment type="tissue specificity">
    <text evidence="3">Found at high levels in developing tubers, at intermediate level in stems, veins, stolons, and stamens, and at low level in leaves and roots.</text>
</comment>
<comment type="induction">
    <text evidence="4">Induced very rapidly by wounding, and slower by darkness, chilling, drought, hypoxia, and treatments with formate, abscisic acid, serine, sarcosine, pyruvate, acetate, ethanol or methanol.</text>
</comment>
<comment type="similarity">
    <text evidence="1">Belongs to the D-isomer specific 2-hydroxyacid dehydrogenase family. FDH subfamily.</text>
</comment>
<comment type="caution">
    <text evidence="7">There are two other putative pseudogenes, FDH2 and FDH3.</text>
</comment>
<name>FDH_SOLTU</name>
<reference key="1">
    <citation type="online journal article" date="1998" name="Plant Gene Register">
        <title>Evidence for multiple copies of formate dehydrogenase genes in plants: isolation of three potato fdh genes fdh1, fdh2 and fdh3.</title>
        <authorList>
            <person name="Hourton-Cabassa C."/>
            <person name="Ambard-Bretteville F."/>
            <person name="Remy R."/>
            <person name="Colas des Francs-Small C."/>
        </authorList>
        <locator>PGR98-102</locator>
    </citation>
    <scope>NUCLEOTIDE SEQUENCE</scope>
    <source>
        <strain>cv. BF15</strain>
    </source>
</reference>
<reference key="2">
    <citation type="journal article" date="1993" name="Plant Physiol.">
        <title>Identification of a major soluble protein in mitochondria from nonphotosynthetic tissues as NAD-dependent formate dehydrogenase.</title>
        <authorList>
            <person name="Colas des Francs-Small C."/>
            <person name="Ambard-Bretteville F."/>
            <person name="Small I.D."/>
            <person name="Remy R."/>
        </authorList>
    </citation>
    <scope>NUCLEOTIDE SEQUENCE [MRNA] OF 3-381</scope>
    <scope>PARTIAL PROTEIN SEQUENCE</scope>
    <scope>FUNCTION</scope>
    <scope>CATALYTIC ACTIVITY</scope>
    <scope>SUBCELLULAR LOCATION</scope>
    <scope>TISSUE SPECIFICITY</scope>
    <source>
        <strain>cv. BF15</strain>
        <tissue>Tuber</tissue>
    </source>
</reference>
<reference key="3">
    <citation type="submission" date="2000-12" db="EMBL/GenBank/DDBJ databases">
        <authorList>
            <person name="Colas des Francs-Small C.C."/>
        </authorList>
    </citation>
    <scope>SEQUENCE REVISION TO N-TERMINUS</scope>
    <source>
        <strain>cv. BF15</strain>
        <tissue>Tuber</tissue>
    </source>
</reference>
<reference key="4">
    <citation type="journal article" date="1992" name="Plant Physiol.">
        <title>Variation of the polypeptide composition of mitochondria isolated from different potato tissues.</title>
        <authorList>
            <person name="Colas des Francs-Small C."/>
            <person name="Ambard-Bretteville F."/>
            <person name="Darpas A."/>
            <person name="Sallantin M."/>
            <person name="Huet J.-C."/>
            <person name="Pernollet J.-C."/>
            <person name="Remy R."/>
        </authorList>
    </citation>
    <scope>PROTEIN SEQUENCE OF 26-54</scope>
    <scope>SUBCELLULAR LOCATION</scope>
    <source>
        <strain>cv. BF15</strain>
        <tissue>Tuber</tissue>
    </source>
</reference>
<reference key="5">
    <citation type="journal article" date="1998" name="Plant Physiol.">
        <title>Stress induction of mitochondrial formate dehydrogenase in potato leaves.</title>
        <authorList>
            <person name="Hourton-Cabassa C."/>
            <person name="Ambard-Bretteville F."/>
            <person name="Moreau F."/>
            <person name="Davy de Virville J."/>
            <person name="Remy R."/>
            <person name="Colas des Francs-Small C."/>
        </authorList>
    </citation>
    <scope>FUNCTION</scope>
    <scope>INDUCTION</scope>
</reference>
<keyword id="KW-0903">Direct protein sequencing</keyword>
<keyword id="KW-0496">Mitochondrion</keyword>
<keyword id="KW-0520">NAD</keyword>
<keyword id="KW-0560">Oxidoreductase</keyword>
<keyword id="KW-1185">Reference proteome</keyword>
<keyword id="KW-0809">Transit peptide</keyword>
<dbReference type="EC" id="1.17.1.9" evidence="1"/>
<dbReference type="EMBL" id="Z99991">
    <property type="protein sequence ID" value="CAB17080.1"/>
    <property type="molecule type" value="mRNA"/>
</dbReference>
<dbReference type="EMBL" id="Z99992">
    <property type="status" value="NOT_ANNOTATED_CDS"/>
    <property type="molecule type" value="Genomic_DNA"/>
</dbReference>
<dbReference type="EMBL" id="Z21493">
    <property type="protein sequence ID" value="CAA79702.2"/>
    <property type="molecule type" value="mRNA"/>
</dbReference>
<dbReference type="PIR" id="JQ2272">
    <property type="entry name" value="JQ2272"/>
</dbReference>
<dbReference type="RefSeq" id="NP_001274827.1">
    <property type="nucleotide sequence ID" value="NM_001287898.1"/>
</dbReference>
<dbReference type="SMR" id="Q07511"/>
<dbReference type="FunCoup" id="Q07511">
    <property type="interactions" value="395"/>
</dbReference>
<dbReference type="IntAct" id="Q07511">
    <property type="interactions" value="1"/>
</dbReference>
<dbReference type="STRING" id="4113.Q07511"/>
<dbReference type="iPTMnet" id="Q07511"/>
<dbReference type="PaxDb" id="4113-PGSC0003DMT400001303"/>
<dbReference type="GeneID" id="102577429"/>
<dbReference type="KEGG" id="sot:102577429"/>
<dbReference type="eggNOG" id="KOG0069">
    <property type="taxonomic scope" value="Eukaryota"/>
</dbReference>
<dbReference type="InParanoid" id="Q07511"/>
<dbReference type="OrthoDB" id="1621027at2759"/>
<dbReference type="Proteomes" id="UP000011115">
    <property type="component" value="Unassembled WGS sequence"/>
</dbReference>
<dbReference type="ExpressionAtlas" id="Q07511">
    <property type="expression patterns" value="baseline and differential"/>
</dbReference>
<dbReference type="GO" id="GO:0009507">
    <property type="term" value="C:chloroplast"/>
    <property type="evidence" value="ECO:0000318"/>
    <property type="project" value="GO_Central"/>
</dbReference>
<dbReference type="GO" id="GO:0005739">
    <property type="term" value="C:mitochondrion"/>
    <property type="evidence" value="ECO:0007669"/>
    <property type="project" value="UniProtKB-SubCell"/>
</dbReference>
<dbReference type="GO" id="GO:0008863">
    <property type="term" value="F:formate dehydrogenase (NAD+) activity"/>
    <property type="evidence" value="ECO:0000318"/>
    <property type="project" value="GO_Central"/>
</dbReference>
<dbReference type="GO" id="GO:0051287">
    <property type="term" value="F:NAD binding"/>
    <property type="evidence" value="ECO:0007669"/>
    <property type="project" value="InterPro"/>
</dbReference>
<dbReference type="GO" id="GO:0016616">
    <property type="term" value="F:oxidoreductase activity, acting on the CH-OH group of donors, NAD or NADP as acceptor"/>
    <property type="evidence" value="ECO:0007669"/>
    <property type="project" value="InterPro"/>
</dbReference>
<dbReference type="GO" id="GO:0042183">
    <property type="term" value="P:formate catabolic process"/>
    <property type="evidence" value="ECO:0007669"/>
    <property type="project" value="UniProtKB-UniRule"/>
</dbReference>
<dbReference type="CDD" id="cd05302">
    <property type="entry name" value="FDH"/>
    <property type="match status" value="1"/>
</dbReference>
<dbReference type="FunFam" id="3.40.50.720:FF:000057">
    <property type="entry name" value="Formate dehydrogenase"/>
    <property type="match status" value="1"/>
</dbReference>
<dbReference type="Gene3D" id="3.40.50.720">
    <property type="entry name" value="NAD(P)-binding Rossmann-like Domain"/>
    <property type="match status" value="2"/>
</dbReference>
<dbReference type="HAMAP" id="MF_03210">
    <property type="entry name" value="Formate_dehydrogenase"/>
    <property type="match status" value="1"/>
</dbReference>
<dbReference type="InterPro" id="IPR006139">
    <property type="entry name" value="D-isomer_2_OHA_DH_cat_dom"/>
</dbReference>
<dbReference type="InterPro" id="IPR029753">
    <property type="entry name" value="D-isomer_DH_CS"/>
</dbReference>
<dbReference type="InterPro" id="IPR029752">
    <property type="entry name" value="D-isomer_DH_CS1"/>
</dbReference>
<dbReference type="InterPro" id="IPR006140">
    <property type="entry name" value="D-isomer_DH_NAD-bd"/>
</dbReference>
<dbReference type="InterPro" id="IPR033689">
    <property type="entry name" value="FDH_NAD-dep"/>
</dbReference>
<dbReference type="InterPro" id="IPR036291">
    <property type="entry name" value="NAD(P)-bd_dom_sf"/>
</dbReference>
<dbReference type="NCBIfam" id="NF005750">
    <property type="entry name" value="PRK07574.1"/>
    <property type="match status" value="1"/>
</dbReference>
<dbReference type="PANTHER" id="PTHR42938">
    <property type="entry name" value="FORMATE DEHYDROGENASE 1"/>
    <property type="match status" value="1"/>
</dbReference>
<dbReference type="PANTHER" id="PTHR42938:SF9">
    <property type="entry name" value="FORMATE DEHYDROGENASE 1"/>
    <property type="match status" value="1"/>
</dbReference>
<dbReference type="Pfam" id="PF00389">
    <property type="entry name" value="2-Hacid_dh"/>
    <property type="match status" value="1"/>
</dbReference>
<dbReference type="Pfam" id="PF02826">
    <property type="entry name" value="2-Hacid_dh_C"/>
    <property type="match status" value="1"/>
</dbReference>
<dbReference type="SUPFAM" id="SSF52283">
    <property type="entry name" value="Formate/glycerate dehydrogenase catalytic domain-like"/>
    <property type="match status" value="1"/>
</dbReference>
<dbReference type="SUPFAM" id="SSF51735">
    <property type="entry name" value="NAD(P)-binding Rossmann-fold domains"/>
    <property type="match status" value="1"/>
</dbReference>
<dbReference type="PROSITE" id="PS00065">
    <property type="entry name" value="D_2_HYDROXYACID_DH_1"/>
    <property type="match status" value="1"/>
</dbReference>
<dbReference type="PROSITE" id="PS00670">
    <property type="entry name" value="D_2_HYDROXYACID_DH_2"/>
    <property type="match status" value="1"/>
</dbReference>
<dbReference type="PROSITE" id="PS00671">
    <property type="entry name" value="D_2_HYDROXYACID_DH_3"/>
    <property type="match status" value="1"/>
</dbReference>
<organism>
    <name type="scientific">Solanum tuberosum</name>
    <name type="common">Potato</name>
    <dbReference type="NCBI Taxonomy" id="4113"/>
    <lineage>
        <taxon>Eukaryota</taxon>
        <taxon>Viridiplantae</taxon>
        <taxon>Streptophyta</taxon>
        <taxon>Embryophyta</taxon>
        <taxon>Tracheophyta</taxon>
        <taxon>Spermatophyta</taxon>
        <taxon>Magnoliopsida</taxon>
        <taxon>eudicotyledons</taxon>
        <taxon>Gunneridae</taxon>
        <taxon>Pentapetalae</taxon>
        <taxon>asterids</taxon>
        <taxon>lamiids</taxon>
        <taxon>Solanales</taxon>
        <taxon>Solanaceae</taxon>
        <taxon>Solanoideae</taxon>
        <taxon>Solaneae</taxon>
        <taxon>Solanum</taxon>
    </lineage>
</organism>
<gene>
    <name evidence="6" type="primary">FDH1</name>
</gene>
<feature type="transit peptide" description="Mitochondrion" evidence="2">
    <location>
        <begin position="1"/>
        <end position="25"/>
    </location>
</feature>
<feature type="chain" id="PRO_0000007196" description="Formate dehydrogenase, mitochondrial">
    <location>
        <begin position="26"/>
        <end position="381"/>
    </location>
</feature>
<feature type="binding site" evidence="1">
    <location>
        <position position="125"/>
    </location>
    <ligand>
        <name>substrate</name>
    </ligand>
</feature>
<feature type="binding site" evidence="1">
    <location>
        <position position="149"/>
    </location>
    <ligand>
        <name>substrate</name>
    </ligand>
</feature>
<feature type="binding site" evidence="1">
    <location>
        <position position="150"/>
    </location>
    <ligand>
        <name>NAD(+)</name>
        <dbReference type="ChEBI" id="CHEBI:57540"/>
    </ligand>
</feature>
<feature type="binding site" evidence="1">
    <location>
        <begin position="204"/>
        <end position="205"/>
    </location>
    <ligand>
        <name>NAD(+)</name>
        <dbReference type="ChEBI" id="CHEBI:57540"/>
    </ligand>
</feature>
<feature type="binding site" evidence="1">
    <location>
        <position position="224"/>
    </location>
    <ligand>
        <name>NAD(+)</name>
        <dbReference type="ChEBI" id="CHEBI:57540"/>
    </ligand>
</feature>
<feature type="binding site" evidence="1">
    <location>
        <begin position="259"/>
        <end position="263"/>
    </location>
    <ligand>
        <name>NAD(+)</name>
        <dbReference type="ChEBI" id="CHEBI:57540"/>
    </ligand>
</feature>
<feature type="binding site" evidence="1">
    <location>
        <position position="285"/>
    </location>
    <ligand>
        <name>NAD(+)</name>
        <dbReference type="ChEBI" id="CHEBI:57540"/>
    </ligand>
</feature>
<feature type="binding site" evidence="1">
    <location>
        <position position="311"/>
    </location>
    <ligand>
        <name>NAD(+)</name>
        <dbReference type="ChEBI" id="CHEBI:57540"/>
    </ligand>
</feature>
<feature type="binding site" evidence="1">
    <location>
        <begin position="335"/>
        <end position="338"/>
    </location>
    <ligand>
        <name>NAD(+)</name>
        <dbReference type="ChEBI" id="CHEBI:57540"/>
    </ligand>
</feature>
<feature type="site" description="Important for catalytic activity" evidence="1">
    <location>
        <position position="287"/>
    </location>
</feature>
<feature type="site" description="Important for catalytic activity" evidence="1">
    <location>
        <position position="335"/>
    </location>
</feature>
<sequence>MAMSRVASTAARAITSPSSLVFTRELQASPGPKKIVGVFYKANEYAEMNPNFLGCAENALGIREWLESKGHQYIVTPDKEGPDCELEKHIPDLHVLISTPFHPAYVTAERIKKAKNLQLLLTAGIGSDHVDLKAAAAAGLTVAEVTGSNTVSVAEDELMRILILVRNFLPGHHQVINGEWNVAAIAHRAYDLEGKTVGTVGAGRIGRLLLQRLKPFNCNLLYHDRLKMDSELENQIGAKFEEDLDKMLSKCDIVVINTPLTEKTKGMFDKERIAKLKKGVLIVNNARGAIMDTQAVVDACNSGHIAGYSGDVWYPQPAPKDHPWRYMPNQAMTPHISGTTIDAQLRYAAGTKDMLDRYFKGEDFPAENYIVKDGELAPQYR</sequence>